<name>OTAR1_ASPNC</name>
<reference key="1">
    <citation type="journal article" date="2007" name="Nat. Biotechnol.">
        <title>Genome sequencing and analysis of the versatile cell factory Aspergillus niger CBS 513.88.</title>
        <authorList>
            <person name="Pel H.J."/>
            <person name="de Winde J.H."/>
            <person name="Archer D.B."/>
            <person name="Dyer P.S."/>
            <person name="Hofmann G."/>
            <person name="Schaap P.J."/>
            <person name="Turner G."/>
            <person name="de Vries R.P."/>
            <person name="Albang R."/>
            <person name="Albermann K."/>
            <person name="Andersen M.R."/>
            <person name="Bendtsen J.D."/>
            <person name="Benen J.A.E."/>
            <person name="van den Berg M."/>
            <person name="Breestraat S."/>
            <person name="Caddick M.X."/>
            <person name="Contreras R."/>
            <person name="Cornell M."/>
            <person name="Coutinho P.M."/>
            <person name="Danchin E.G.J."/>
            <person name="Debets A.J.M."/>
            <person name="Dekker P."/>
            <person name="van Dijck P.W.M."/>
            <person name="van Dijk A."/>
            <person name="Dijkhuizen L."/>
            <person name="Driessen A.J.M."/>
            <person name="d'Enfert C."/>
            <person name="Geysens S."/>
            <person name="Goosen C."/>
            <person name="Groot G.S.P."/>
            <person name="de Groot P.W.J."/>
            <person name="Guillemette T."/>
            <person name="Henrissat B."/>
            <person name="Herweijer M."/>
            <person name="van den Hombergh J.P.T.W."/>
            <person name="van den Hondel C.A.M.J.J."/>
            <person name="van der Heijden R.T.J.M."/>
            <person name="van der Kaaij R.M."/>
            <person name="Klis F.M."/>
            <person name="Kools H.J."/>
            <person name="Kubicek C.P."/>
            <person name="van Kuyk P.A."/>
            <person name="Lauber J."/>
            <person name="Lu X."/>
            <person name="van der Maarel M.J.E.C."/>
            <person name="Meulenberg R."/>
            <person name="Menke H."/>
            <person name="Mortimer M.A."/>
            <person name="Nielsen J."/>
            <person name="Oliver S.G."/>
            <person name="Olsthoorn M."/>
            <person name="Pal K."/>
            <person name="van Peij N.N.M.E."/>
            <person name="Ram A.F.J."/>
            <person name="Rinas U."/>
            <person name="Roubos J.A."/>
            <person name="Sagt C.M.J."/>
            <person name="Schmoll M."/>
            <person name="Sun J."/>
            <person name="Ussery D."/>
            <person name="Varga J."/>
            <person name="Vervecken W."/>
            <person name="van de Vondervoort P.J.J."/>
            <person name="Wedler H."/>
            <person name="Woesten H.A.B."/>
            <person name="Zeng A.-P."/>
            <person name="van Ooyen A.J.J."/>
            <person name="Visser J."/>
            <person name="Stam H."/>
        </authorList>
    </citation>
    <scope>NUCLEOTIDE SEQUENCE [LARGE SCALE GENOMIC DNA]</scope>
    <source>
        <strain>ATCC MYA-4892 / CBS 513.88 / FGSC A1513</strain>
    </source>
</reference>
<reference key="2">
    <citation type="journal article" date="2016" name="Front. Microbiol.">
        <title>Variation in fumonisin and ochratoxin production associated with differences in biosynthetic gene content in Aspergillus niger and A. welwitschiae isolates from multiple crop and geographic origins.</title>
        <authorList>
            <person name="Susca A."/>
            <person name="Proctor R.H."/>
            <person name="Morelli M."/>
            <person name="Haidukowski M."/>
            <person name="Gallo A."/>
            <person name="Logrieco A.F."/>
            <person name="Moretti A."/>
        </authorList>
    </citation>
    <scope>FUNCTION</scope>
</reference>
<reference key="3">
    <citation type="journal article" date="2020" name="Front. Microbiol.">
        <title>Comparative genomic analysis of ochratoxin A biosynthetic cluster in producing fungi: new evidence of a cyclase gene involvement.</title>
        <authorList>
            <person name="Ferrara M."/>
            <person name="Gallo A."/>
            <person name="Perrone G."/>
            <person name="Magista D."/>
            <person name="Baker S.E."/>
        </authorList>
    </citation>
    <scope>NOMENCLATURE</scope>
    <scope>FUNCTION</scope>
</reference>
<reference key="4">
    <citation type="journal article" date="2022" name="J. Agric. Food Chem.">
        <title>Deletion and overexpression of the AnOTAbzip gene, a positive regulator of ochratoxin A biosynthesis in Aspergillus niger.</title>
        <authorList>
            <person name="Zhang J."/>
            <person name="Li L."/>
            <person name="Yang Y."/>
            <person name="Zhao C."/>
            <person name="Hu J."/>
            <person name="Xue X."/>
            <person name="Gao Q."/>
            <person name="Wang D."/>
            <person name="Zhuang Z."/>
            <person name="Zhang Y."/>
        </authorList>
    </citation>
    <scope>FUNCTION</scope>
    <scope>DISRUPTION PHENOTYPE</scope>
</reference>
<reference key="5">
    <citation type="journal article" date="2022" name="Toxins">
        <title>Insights into the Underlying Mechanism of Ochratoxin A Production in Aspergillus niger CBS 513.88 Using Different Carbon Sources.</title>
        <authorList>
            <person name="Wei S."/>
            <person name="Hu C."/>
            <person name="Nie P."/>
            <person name="Zhai H."/>
            <person name="Zhang S."/>
            <person name="Li N."/>
            <person name="Lv Y."/>
            <person name="Hu Y."/>
        </authorList>
    </citation>
    <scope>INDUCTION</scope>
</reference>
<sequence>MDGFEIASELLQASHHLPVLGTGSPSGSDIISGNYMLGYSADDANLSQFEQLEGLLGSPTVANHVDFGKETADLAFLDDSGGILSSVELAGMVSPPLDAVVPMPGITRASRSRPAFSTPASRPGLSSAKSPSLGATSPGSMDRSEEVKQLRKKYHEKYKERNRLAAGRSRQKQADLINLLQAEQQEEERRRKALELEIANMQKELVDMKQELQHHIRISNC</sequence>
<keyword id="KW-0238">DNA-binding</keyword>
<keyword id="KW-0539">Nucleus</keyword>
<keyword id="KW-1185">Reference proteome</keyword>
<keyword id="KW-0804">Transcription</keyword>
<keyword id="KW-0805">Transcription regulation</keyword>
<comment type="function">
    <text evidence="3 4 5">Transcription factor; part of the gene cluster that mediates the biosynthesis of ochratoxin A (OTA), a mycotoxin demonstrated to have nephrotoxic, immunotoxic, genotoxic, neurotoxic, and teratogenic properties (PubMed:27667988, PubMed:33391201). Positively regulates the expression of the OTA biosynthetic genes and subsequent production of OTA (PubMed:35143724). Probably binds to conserved 5'-ACGT-3' bZIP binding motifs found in multiple copies (3 to 4) in the promoters of the OTA biosynthetic genes (PubMed:35143724). Acts not only as a pathway-specific regulator of the OTA cluster but also binds at other chromosomal positions outside the OTA cluster and can act as a broad regulator (PubMed:35143724). Negatively regulates pathogenicity and plays a critical role in tolerance to reactive oxygen species (ROS) (PubMed:35143724).</text>
</comment>
<comment type="subcellular location">
    <subcellularLocation>
        <location evidence="1">Nucleus</location>
    </subcellularLocation>
</comment>
<comment type="induction">
    <text evidence="6">Expression is induced by sucrose, glucose and arabinose which repress the gal4 transcription factor, a negative regulator of the ochratoxin gene cluster.</text>
</comment>
<comment type="disruption phenotype">
    <text evidence="5">Leads to the loss of ochratoxin A (OTA) production and the down-regulation of the OTA biosynthetic genes (PubMed:35143724). Produces greater lesions on grape berries and is more tolerant to oxidative stress (PubMed:35143724).</text>
</comment>
<feature type="chain" id="PRO_0000440593" description="Transcription factor otaR1">
    <location>
        <begin position="1"/>
        <end position="221"/>
    </location>
</feature>
<feature type="domain" description="bZIP" evidence="1">
    <location>
        <begin position="152"/>
        <end position="215"/>
    </location>
</feature>
<feature type="region of interest" description="Disordered" evidence="2">
    <location>
        <begin position="109"/>
        <end position="146"/>
    </location>
</feature>
<feature type="region of interest" description="Basic motif" evidence="1">
    <location>
        <begin position="152"/>
        <end position="192"/>
    </location>
</feature>
<feature type="region of interest" description="Leucine-zipper" evidence="1">
    <location>
        <begin position="198"/>
        <end position="212"/>
    </location>
</feature>
<feature type="compositionally biased region" description="Polar residues" evidence="2">
    <location>
        <begin position="127"/>
        <end position="139"/>
    </location>
</feature>
<gene>
    <name evidence="8" type="primary">otaR1</name>
    <name evidence="7" type="synonym">ota4</name>
    <name evidence="9" type="synonym">OTAbZIP</name>
    <name type="ORF">An15g07890</name>
</gene>
<evidence type="ECO:0000255" key="1">
    <source>
        <dbReference type="PROSITE-ProRule" id="PRU00978"/>
    </source>
</evidence>
<evidence type="ECO:0000256" key="2">
    <source>
        <dbReference type="SAM" id="MobiDB-lite"/>
    </source>
</evidence>
<evidence type="ECO:0000269" key="3">
    <source>
    </source>
</evidence>
<evidence type="ECO:0000269" key="4">
    <source>
    </source>
</evidence>
<evidence type="ECO:0000269" key="5">
    <source>
    </source>
</evidence>
<evidence type="ECO:0000269" key="6">
    <source>
    </source>
</evidence>
<evidence type="ECO:0000303" key="7">
    <source>
    </source>
</evidence>
<evidence type="ECO:0000303" key="8">
    <source>
    </source>
</evidence>
<evidence type="ECO:0000303" key="9">
    <source>
    </source>
</evidence>
<proteinExistence type="evidence at transcript level"/>
<dbReference type="EMBL" id="AM270352">
    <property type="protein sequence ID" value="CAK42676.1"/>
    <property type="molecule type" value="Genomic_DNA"/>
</dbReference>
<dbReference type="SMR" id="A2R6G8"/>
<dbReference type="EnsemblFungi" id="CAK42676">
    <property type="protein sequence ID" value="CAK42676"/>
    <property type="gene ID" value="An15g07890"/>
</dbReference>
<dbReference type="VEuPathDB" id="FungiDB:An15g07890"/>
<dbReference type="HOGENOM" id="CLU_1250404_0_0_1"/>
<dbReference type="Proteomes" id="UP000006706">
    <property type="component" value="Chromosome 3R"/>
</dbReference>
<dbReference type="GO" id="GO:0005634">
    <property type="term" value="C:nucleus"/>
    <property type="evidence" value="ECO:0007669"/>
    <property type="project" value="UniProtKB-SubCell"/>
</dbReference>
<dbReference type="GO" id="GO:0000981">
    <property type="term" value="F:DNA-binding transcription factor activity, RNA polymerase II-specific"/>
    <property type="evidence" value="ECO:0007669"/>
    <property type="project" value="TreeGrafter"/>
</dbReference>
<dbReference type="GO" id="GO:0000978">
    <property type="term" value="F:RNA polymerase II cis-regulatory region sequence-specific DNA binding"/>
    <property type="evidence" value="ECO:0007669"/>
    <property type="project" value="TreeGrafter"/>
</dbReference>
<dbReference type="GO" id="GO:1900818">
    <property type="term" value="P:ochratoxin A biosynthetic process"/>
    <property type="evidence" value="ECO:0000314"/>
    <property type="project" value="GO_Central"/>
</dbReference>
<dbReference type="GO" id="GO:0006355">
    <property type="term" value="P:regulation of DNA-templated transcription"/>
    <property type="evidence" value="ECO:0000314"/>
    <property type="project" value="GO_Central"/>
</dbReference>
<dbReference type="Gene3D" id="1.20.5.170">
    <property type="match status" value="1"/>
</dbReference>
<dbReference type="InterPro" id="IPR000837">
    <property type="entry name" value="AP-1"/>
</dbReference>
<dbReference type="InterPro" id="IPR004827">
    <property type="entry name" value="bZIP"/>
</dbReference>
<dbReference type="InterPro" id="IPR046347">
    <property type="entry name" value="bZIP_sf"/>
</dbReference>
<dbReference type="PANTHER" id="PTHR23351:SF24">
    <property type="entry name" value="ACTIVATING TRANSCRIPTION FACTOR 3-RELATED"/>
    <property type="match status" value="1"/>
</dbReference>
<dbReference type="PANTHER" id="PTHR23351">
    <property type="entry name" value="FOS TRANSCRIPTION FACTOR-RELATED"/>
    <property type="match status" value="1"/>
</dbReference>
<dbReference type="PRINTS" id="PR00042">
    <property type="entry name" value="LEUZIPPRFOS"/>
</dbReference>
<dbReference type="SUPFAM" id="SSF57959">
    <property type="entry name" value="Leucine zipper domain"/>
    <property type="match status" value="1"/>
</dbReference>
<dbReference type="PROSITE" id="PS50217">
    <property type="entry name" value="BZIP"/>
    <property type="match status" value="1"/>
</dbReference>
<dbReference type="PROSITE" id="PS00036">
    <property type="entry name" value="BZIP_BASIC"/>
    <property type="match status" value="1"/>
</dbReference>
<accession>A2R6G8</accession>
<protein>
    <recommendedName>
        <fullName evidence="7">Transcription factor otaR1</fullName>
    </recommendedName>
    <alternativeName>
        <fullName evidence="9">Ochratoxin biosynthesis cluster bZIP transcription factor</fullName>
    </alternativeName>
    <alternativeName>
        <fullName evidence="7">Ochratoxin biosynthesis cluster protein 4</fullName>
    </alternativeName>
    <alternativeName>
        <fullName evidence="8">Ochratoxin biosynthesis cluster protein R1</fullName>
    </alternativeName>
</protein>
<organism>
    <name type="scientific">Aspergillus niger (strain ATCC MYA-4892 / CBS 513.88 / FGSC A1513)</name>
    <dbReference type="NCBI Taxonomy" id="425011"/>
    <lineage>
        <taxon>Eukaryota</taxon>
        <taxon>Fungi</taxon>
        <taxon>Dikarya</taxon>
        <taxon>Ascomycota</taxon>
        <taxon>Pezizomycotina</taxon>
        <taxon>Eurotiomycetes</taxon>
        <taxon>Eurotiomycetidae</taxon>
        <taxon>Eurotiales</taxon>
        <taxon>Aspergillaceae</taxon>
        <taxon>Aspergillus</taxon>
        <taxon>Aspergillus subgen. Circumdati</taxon>
    </lineage>
</organism>